<accession>Q7NP63</accession>
<dbReference type="EC" id="2.2.1.7" evidence="1"/>
<dbReference type="EMBL" id="BA000045">
    <property type="protein sequence ID" value="BAC88135.1"/>
    <property type="molecule type" value="Genomic_DNA"/>
</dbReference>
<dbReference type="RefSeq" id="NP_923140.1">
    <property type="nucleotide sequence ID" value="NC_005125.1"/>
</dbReference>
<dbReference type="RefSeq" id="WP_011140198.1">
    <property type="nucleotide sequence ID" value="NC_005125.1"/>
</dbReference>
<dbReference type="SMR" id="Q7NP63"/>
<dbReference type="FunCoup" id="Q7NP63">
    <property type="interactions" value="219"/>
</dbReference>
<dbReference type="STRING" id="251221.gene:10757665"/>
<dbReference type="EnsemblBacteria" id="BAC88135">
    <property type="protein sequence ID" value="BAC88135"/>
    <property type="gene ID" value="BAC88135"/>
</dbReference>
<dbReference type="KEGG" id="gvi:gll0194"/>
<dbReference type="PATRIC" id="fig|251221.4.peg.195"/>
<dbReference type="eggNOG" id="COG1154">
    <property type="taxonomic scope" value="Bacteria"/>
</dbReference>
<dbReference type="HOGENOM" id="CLU_009227_1_4_3"/>
<dbReference type="InParanoid" id="Q7NP63"/>
<dbReference type="OrthoDB" id="9803371at2"/>
<dbReference type="PhylomeDB" id="Q7NP63"/>
<dbReference type="UniPathway" id="UPA00064">
    <property type="reaction ID" value="UER00091"/>
</dbReference>
<dbReference type="Proteomes" id="UP000000557">
    <property type="component" value="Chromosome"/>
</dbReference>
<dbReference type="GO" id="GO:0005829">
    <property type="term" value="C:cytosol"/>
    <property type="evidence" value="ECO:0000318"/>
    <property type="project" value="GO_Central"/>
</dbReference>
<dbReference type="GO" id="GO:0008661">
    <property type="term" value="F:1-deoxy-D-xylulose-5-phosphate synthase activity"/>
    <property type="evidence" value="ECO:0000318"/>
    <property type="project" value="GO_Central"/>
</dbReference>
<dbReference type="GO" id="GO:0000287">
    <property type="term" value="F:magnesium ion binding"/>
    <property type="evidence" value="ECO:0007669"/>
    <property type="project" value="UniProtKB-UniRule"/>
</dbReference>
<dbReference type="GO" id="GO:0030976">
    <property type="term" value="F:thiamine pyrophosphate binding"/>
    <property type="evidence" value="ECO:0007669"/>
    <property type="project" value="UniProtKB-UniRule"/>
</dbReference>
<dbReference type="GO" id="GO:0052865">
    <property type="term" value="P:1-deoxy-D-xylulose 5-phosphate biosynthetic process"/>
    <property type="evidence" value="ECO:0007669"/>
    <property type="project" value="UniProtKB-UniPathway"/>
</dbReference>
<dbReference type="GO" id="GO:0019288">
    <property type="term" value="P:isopentenyl diphosphate biosynthetic process, methylerythritol 4-phosphate pathway"/>
    <property type="evidence" value="ECO:0000318"/>
    <property type="project" value="GO_Central"/>
</dbReference>
<dbReference type="GO" id="GO:0016114">
    <property type="term" value="P:terpenoid biosynthetic process"/>
    <property type="evidence" value="ECO:0007669"/>
    <property type="project" value="UniProtKB-UniRule"/>
</dbReference>
<dbReference type="GO" id="GO:0009228">
    <property type="term" value="P:thiamine biosynthetic process"/>
    <property type="evidence" value="ECO:0007669"/>
    <property type="project" value="UniProtKB-UniRule"/>
</dbReference>
<dbReference type="CDD" id="cd02007">
    <property type="entry name" value="TPP_DXS"/>
    <property type="match status" value="1"/>
</dbReference>
<dbReference type="CDD" id="cd07033">
    <property type="entry name" value="TPP_PYR_DXS_TK_like"/>
    <property type="match status" value="1"/>
</dbReference>
<dbReference type="FunFam" id="3.40.50.920:FF:000002">
    <property type="entry name" value="1-deoxy-D-xylulose-5-phosphate synthase"/>
    <property type="match status" value="1"/>
</dbReference>
<dbReference type="FunFam" id="3.40.50.970:FF:000005">
    <property type="entry name" value="1-deoxy-D-xylulose-5-phosphate synthase"/>
    <property type="match status" value="1"/>
</dbReference>
<dbReference type="Gene3D" id="3.40.50.920">
    <property type="match status" value="1"/>
</dbReference>
<dbReference type="Gene3D" id="3.40.50.970">
    <property type="match status" value="2"/>
</dbReference>
<dbReference type="HAMAP" id="MF_00315">
    <property type="entry name" value="DXP_synth"/>
    <property type="match status" value="1"/>
</dbReference>
<dbReference type="InterPro" id="IPR005477">
    <property type="entry name" value="Dxylulose-5-P_synthase"/>
</dbReference>
<dbReference type="InterPro" id="IPR029061">
    <property type="entry name" value="THDP-binding"/>
</dbReference>
<dbReference type="InterPro" id="IPR009014">
    <property type="entry name" value="Transketo_C/PFOR_II"/>
</dbReference>
<dbReference type="InterPro" id="IPR005475">
    <property type="entry name" value="Transketolase-like_Pyr-bd"/>
</dbReference>
<dbReference type="InterPro" id="IPR020826">
    <property type="entry name" value="Transketolase_BS"/>
</dbReference>
<dbReference type="InterPro" id="IPR033248">
    <property type="entry name" value="Transketolase_C"/>
</dbReference>
<dbReference type="InterPro" id="IPR049557">
    <property type="entry name" value="Transketolase_CS"/>
</dbReference>
<dbReference type="NCBIfam" id="TIGR00204">
    <property type="entry name" value="dxs"/>
    <property type="match status" value="1"/>
</dbReference>
<dbReference type="NCBIfam" id="NF003933">
    <property type="entry name" value="PRK05444.2-2"/>
    <property type="match status" value="1"/>
</dbReference>
<dbReference type="PANTHER" id="PTHR43322">
    <property type="entry name" value="1-D-DEOXYXYLULOSE 5-PHOSPHATE SYNTHASE-RELATED"/>
    <property type="match status" value="1"/>
</dbReference>
<dbReference type="PANTHER" id="PTHR43322:SF5">
    <property type="entry name" value="1-DEOXY-D-XYLULOSE-5-PHOSPHATE SYNTHASE, CHLOROPLASTIC"/>
    <property type="match status" value="1"/>
</dbReference>
<dbReference type="Pfam" id="PF13292">
    <property type="entry name" value="DXP_synthase_N"/>
    <property type="match status" value="1"/>
</dbReference>
<dbReference type="Pfam" id="PF02779">
    <property type="entry name" value="Transket_pyr"/>
    <property type="match status" value="1"/>
</dbReference>
<dbReference type="Pfam" id="PF02780">
    <property type="entry name" value="Transketolase_C"/>
    <property type="match status" value="1"/>
</dbReference>
<dbReference type="SMART" id="SM00861">
    <property type="entry name" value="Transket_pyr"/>
    <property type="match status" value="1"/>
</dbReference>
<dbReference type="SUPFAM" id="SSF52518">
    <property type="entry name" value="Thiamin diphosphate-binding fold (THDP-binding)"/>
    <property type="match status" value="2"/>
</dbReference>
<dbReference type="SUPFAM" id="SSF52922">
    <property type="entry name" value="TK C-terminal domain-like"/>
    <property type="match status" value="1"/>
</dbReference>
<dbReference type="PROSITE" id="PS00801">
    <property type="entry name" value="TRANSKETOLASE_1"/>
    <property type="match status" value="1"/>
</dbReference>
<dbReference type="PROSITE" id="PS00802">
    <property type="entry name" value="TRANSKETOLASE_2"/>
    <property type="match status" value="1"/>
</dbReference>
<gene>
    <name evidence="1" type="primary">dxs</name>
    <name type="ordered locus">gll0194</name>
</gene>
<evidence type="ECO:0000255" key="1">
    <source>
        <dbReference type="HAMAP-Rule" id="MF_00315"/>
    </source>
</evidence>
<proteinExistence type="inferred from homology"/>
<comment type="function">
    <text evidence="1">Catalyzes the acyloin condensation reaction between C atoms 2 and 3 of pyruvate and glyceraldehyde 3-phosphate to yield 1-deoxy-D-xylulose-5-phosphate (DXP).</text>
</comment>
<comment type="catalytic activity">
    <reaction evidence="1">
        <text>D-glyceraldehyde 3-phosphate + pyruvate + H(+) = 1-deoxy-D-xylulose 5-phosphate + CO2</text>
        <dbReference type="Rhea" id="RHEA:12605"/>
        <dbReference type="ChEBI" id="CHEBI:15361"/>
        <dbReference type="ChEBI" id="CHEBI:15378"/>
        <dbReference type="ChEBI" id="CHEBI:16526"/>
        <dbReference type="ChEBI" id="CHEBI:57792"/>
        <dbReference type="ChEBI" id="CHEBI:59776"/>
        <dbReference type="EC" id="2.2.1.7"/>
    </reaction>
</comment>
<comment type="cofactor">
    <cofactor evidence="1">
        <name>Mg(2+)</name>
        <dbReference type="ChEBI" id="CHEBI:18420"/>
    </cofactor>
    <text evidence="1">Binds 1 Mg(2+) ion per subunit.</text>
</comment>
<comment type="cofactor">
    <cofactor evidence="1">
        <name>thiamine diphosphate</name>
        <dbReference type="ChEBI" id="CHEBI:58937"/>
    </cofactor>
    <text evidence="1">Binds 1 thiamine pyrophosphate per subunit.</text>
</comment>
<comment type="pathway">
    <text evidence="1">Metabolic intermediate biosynthesis; 1-deoxy-D-xylulose 5-phosphate biosynthesis; 1-deoxy-D-xylulose 5-phosphate from D-glyceraldehyde 3-phosphate and pyruvate: step 1/1.</text>
</comment>
<comment type="subunit">
    <text evidence="1">Homodimer.</text>
</comment>
<comment type="similarity">
    <text evidence="1">Belongs to the transketolase family. DXPS subfamily.</text>
</comment>
<name>DXS_GLOVI</name>
<protein>
    <recommendedName>
        <fullName evidence="1">1-deoxy-D-xylulose-5-phosphate synthase</fullName>
        <ecNumber evidence="1">2.2.1.7</ecNumber>
    </recommendedName>
    <alternativeName>
        <fullName evidence="1">1-deoxyxylulose-5-phosphate synthase</fullName>
        <shortName evidence="1">DXP synthase</shortName>
        <shortName evidence="1">DXPS</shortName>
    </alternativeName>
</protein>
<sequence length="638" mass="68802">MNLSDLSHPNQLRDLSVSQLGRLAQQIRDKHLQTVAATGGHLGPGLGVVELTLALYKTLDLDRDRVVWDVGHQAYPHKMLTGRYANFHTLRQKDGLAGYLKRAESPFDCWGAGHASTSISAALGMALARDFQGLNRKVVAIIGDGALTGGMALEALNHAGHLSKTNLMVILNDNEMSISENVGGLSLYLNRLRTDPALRQIRSNLETQLRNIPLVGPTFSPEFERFKDTVKYMTMTRSKAGVIFEELGFTYLGPIDGHNLGDLIETFEFAHSLPGPVFLHAITVKGKGYEVAEQNQIKYHAQSAFDLATGKAKPASKPTPPAYTSVFAQTLVKLAEQNEKIVGITAAMPTGTGLDKFKERFADRYFDVGIAEQHAVTMAAGLAADGMRPVAAIYSTFLQRAFDQIIHDVAIQDLPVFFCLDRAGVVGEDGPTHHGVFDLAYLRQIPGLVVMAPKDEAELQRMMVTGIQYTKGPIAVRYPRGSGSGAPLMAEGWDPVPIGKAEVLRSGDDLLIVAIGTMVHPSLQAAALLSEHGIDATVVNARFAKPLDTELLLPLARRIGRVVTVEEGCRMGGFGSAVLEALMDGGIAVPTLRIGIDDKFVTHAGRSQLLDLLGLTPSGIAKTIRESLSTEPVSAPRA</sequence>
<organism>
    <name type="scientific">Gloeobacter violaceus (strain ATCC 29082 / PCC 7421)</name>
    <dbReference type="NCBI Taxonomy" id="251221"/>
    <lineage>
        <taxon>Bacteria</taxon>
        <taxon>Bacillati</taxon>
        <taxon>Cyanobacteriota</taxon>
        <taxon>Cyanophyceae</taxon>
        <taxon>Gloeobacterales</taxon>
        <taxon>Gloeobacteraceae</taxon>
        <taxon>Gloeobacter</taxon>
    </lineage>
</organism>
<feature type="chain" id="PRO_0000189115" description="1-deoxy-D-xylulose-5-phosphate synthase">
    <location>
        <begin position="1"/>
        <end position="638"/>
    </location>
</feature>
<feature type="binding site" evidence="1">
    <location>
        <position position="72"/>
    </location>
    <ligand>
        <name>thiamine diphosphate</name>
        <dbReference type="ChEBI" id="CHEBI:58937"/>
    </ligand>
</feature>
<feature type="binding site" evidence="1">
    <location>
        <begin position="113"/>
        <end position="115"/>
    </location>
    <ligand>
        <name>thiamine diphosphate</name>
        <dbReference type="ChEBI" id="CHEBI:58937"/>
    </ligand>
</feature>
<feature type="binding site" evidence="1">
    <location>
        <position position="144"/>
    </location>
    <ligand>
        <name>Mg(2+)</name>
        <dbReference type="ChEBI" id="CHEBI:18420"/>
    </ligand>
</feature>
<feature type="binding site" evidence="1">
    <location>
        <begin position="145"/>
        <end position="146"/>
    </location>
    <ligand>
        <name>thiamine diphosphate</name>
        <dbReference type="ChEBI" id="CHEBI:58937"/>
    </ligand>
</feature>
<feature type="binding site" evidence="1">
    <location>
        <position position="174"/>
    </location>
    <ligand>
        <name>Mg(2+)</name>
        <dbReference type="ChEBI" id="CHEBI:18420"/>
    </ligand>
</feature>
<feature type="binding site" evidence="1">
    <location>
        <position position="174"/>
    </location>
    <ligand>
        <name>thiamine diphosphate</name>
        <dbReference type="ChEBI" id="CHEBI:58937"/>
    </ligand>
</feature>
<feature type="binding site" evidence="1">
    <location>
        <position position="289"/>
    </location>
    <ligand>
        <name>thiamine diphosphate</name>
        <dbReference type="ChEBI" id="CHEBI:58937"/>
    </ligand>
</feature>
<feature type="binding site" evidence="1">
    <location>
        <position position="372"/>
    </location>
    <ligand>
        <name>thiamine diphosphate</name>
        <dbReference type="ChEBI" id="CHEBI:58937"/>
    </ligand>
</feature>
<keyword id="KW-0414">Isoprene biosynthesis</keyword>
<keyword id="KW-0460">Magnesium</keyword>
<keyword id="KW-0479">Metal-binding</keyword>
<keyword id="KW-1185">Reference proteome</keyword>
<keyword id="KW-0784">Thiamine biosynthesis</keyword>
<keyword id="KW-0786">Thiamine pyrophosphate</keyword>
<keyword id="KW-0808">Transferase</keyword>
<reference key="1">
    <citation type="journal article" date="2003" name="DNA Res.">
        <title>Complete genome structure of Gloeobacter violaceus PCC 7421, a cyanobacterium that lacks thylakoids.</title>
        <authorList>
            <person name="Nakamura Y."/>
            <person name="Kaneko T."/>
            <person name="Sato S."/>
            <person name="Mimuro M."/>
            <person name="Miyashita H."/>
            <person name="Tsuchiya T."/>
            <person name="Sasamoto S."/>
            <person name="Watanabe A."/>
            <person name="Kawashima K."/>
            <person name="Kishida Y."/>
            <person name="Kiyokawa C."/>
            <person name="Kohara M."/>
            <person name="Matsumoto M."/>
            <person name="Matsuno A."/>
            <person name="Nakazaki N."/>
            <person name="Shimpo S."/>
            <person name="Takeuchi C."/>
            <person name="Yamada M."/>
            <person name="Tabata S."/>
        </authorList>
    </citation>
    <scope>NUCLEOTIDE SEQUENCE [LARGE SCALE GENOMIC DNA]</scope>
    <source>
        <strain>ATCC 29082 / PCC 7421</strain>
    </source>
</reference>